<accession>P62934</accession>
<accession>P01293</accession>
<comment type="function">
    <text>Tachykinins are active peptides which excite neurons, evoke behavioral responses, are potent vasodilators and secretagogues, and contract (directly or indirectly) many smooth muscles.</text>
</comment>
<comment type="subcellular location">
    <subcellularLocation>
        <location>Secreted</location>
    </subcellularLocation>
</comment>
<comment type="similarity">
    <text evidence="2">Belongs to the tachykinin family.</text>
</comment>
<reference key="1">
    <citation type="journal article" date="1963" name="Arch. Biochem. Biophys.">
        <title>The isolation and amino acid sequence of eledoisin, the active endecapeptide of the posterior salivary glands of Eledone.</title>
        <authorList>
            <person name="Anastasi A."/>
            <person name="Erspamer V."/>
        </authorList>
    </citation>
    <scope>PROTEIN SEQUENCE</scope>
    <scope>PYROGLUTAMATE FORMATION AT GLN-1</scope>
    <scope>AMIDATION AT MET-11</scope>
    <source>
        <tissue>Posterior salivary gland</tissue>
    </source>
</reference>
<reference key="2">
    <citation type="journal article" date="2003" name="Biophys. J.">
        <title>Solution structure of the tachykinin peptide eledoisin.</title>
        <authorList>
            <person name="Grace R.C."/>
            <person name="Chandrashekar I.R."/>
            <person name="Cowsik S.M."/>
        </authorList>
    </citation>
    <scope>STRUCTURE BY NMR</scope>
</reference>
<dbReference type="PIR" id="A01561">
    <property type="entry name" value="EOOC"/>
</dbReference>
<dbReference type="PDB" id="1MXQ">
    <property type="method" value="NMR"/>
    <property type="chains" value="A=2-11"/>
</dbReference>
<dbReference type="PDBsum" id="1MXQ"/>
<dbReference type="SMR" id="P62934"/>
<dbReference type="BindingDB" id="P62934"/>
<dbReference type="GO" id="GO:0005576">
    <property type="term" value="C:extracellular region"/>
    <property type="evidence" value="ECO:0007669"/>
    <property type="project" value="UniProtKB-SubCell"/>
</dbReference>
<dbReference type="GO" id="GO:0007218">
    <property type="term" value="P:neuropeptide signaling pathway"/>
    <property type="evidence" value="ECO:0007669"/>
    <property type="project" value="UniProtKB-KW"/>
</dbReference>
<dbReference type="InterPro" id="IPR013055">
    <property type="entry name" value="Tachy_Neuro_lke_CS"/>
</dbReference>
<dbReference type="PROSITE" id="PS00267">
    <property type="entry name" value="TACHYKININ"/>
    <property type="match status" value="1"/>
</dbReference>
<keyword id="KW-0002">3D-structure</keyword>
<keyword id="KW-0027">Amidation</keyword>
<keyword id="KW-0903">Direct protein sequencing</keyword>
<keyword id="KW-0527">Neuropeptide</keyword>
<keyword id="KW-0873">Pyrrolidone carboxylic acid</keyword>
<keyword id="KW-0964">Secreted</keyword>
<protein>
    <recommendedName>
        <fullName>Eledoisin</fullName>
    </recommendedName>
</protein>
<sequence length="11" mass="1206">QPSKDAFIGLM</sequence>
<proteinExistence type="evidence at protein level"/>
<feature type="peptide" id="PRO_0000044394" description="Eledoisin">
    <location>
        <begin position="1"/>
        <end position="11"/>
    </location>
</feature>
<feature type="modified residue" description="Pyrrolidone carboxylic acid" evidence="1">
    <location>
        <position position="1"/>
    </location>
</feature>
<feature type="modified residue" description="Methionine amide" evidence="1">
    <location>
        <position position="11"/>
    </location>
</feature>
<evidence type="ECO:0000269" key="1">
    <source>
    </source>
</evidence>
<evidence type="ECO:0000305" key="2"/>
<name>TKN_ELEMO</name>
<organism>
    <name type="scientific">Eledone moschata</name>
    <name type="common">Musky octopus</name>
    <name type="synonym">Ozaena moschata</name>
    <dbReference type="NCBI Taxonomy" id="6641"/>
    <lineage>
        <taxon>Eukaryota</taxon>
        <taxon>Metazoa</taxon>
        <taxon>Spiralia</taxon>
        <taxon>Lophotrochozoa</taxon>
        <taxon>Mollusca</taxon>
        <taxon>Cephalopoda</taxon>
        <taxon>Coleoidea</taxon>
        <taxon>Octopodiformes</taxon>
        <taxon>Octopoda</taxon>
        <taxon>Incirrata</taxon>
        <taxon>Octopodidae</taxon>
        <taxon>Eledone</taxon>
    </lineage>
</organism>